<accession>Q47CM7</accession>
<gene>
    <name evidence="1" type="primary">rplT</name>
    <name type="ordered locus">Daro_2674</name>
</gene>
<name>RL20_DECAR</name>
<dbReference type="EMBL" id="CP000089">
    <property type="protein sequence ID" value="AAZ47404.1"/>
    <property type="molecule type" value="Genomic_DNA"/>
</dbReference>
<dbReference type="SMR" id="Q47CM7"/>
<dbReference type="STRING" id="159087.Daro_2674"/>
<dbReference type="KEGG" id="dar:Daro_2674"/>
<dbReference type="eggNOG" id="COG0292">
    <property type="taxonomic scope" value="Bacteria"/>
</dbReference>
<dbReference type="HOGENOM" id="CLU_123265_0_1_4"/>
<dbReference type="OrthoDB" id="9808966at2"/>
<dbReference type="GO" id="GO:1990904">
    <property type="term" value="C:ribonucleoprotein complex"/>
    <property type="evidence" value="ECO:0007669"/>
    <property type="project" value="UniProtKB-KW"/>
</dbReference>
<dbReference type="GO" id="GO:0005840">
    <property type="term" value="C:ribosome"/>
    <property type="evidence" value="ECO:0007669"/>
    <property type="project" value="UniProtKB-KW"/>
</dbReference>
<dbReference type="GO" id="GO:0019843">
    <property type="term" value="F:rRNA binding"/>
    <property type="evidence" value="ECO:0007669"/>
    <property type="project" value="UniProtKB-UniRule"/>
</dbReference>
<dbReference type="GO" id="GO:0003735">
    <property type="term" value="F:structural constituent of ribosome"/>
    <property type="evidence" value="ECO:0007669"/>
    <property type="project" value="InterPro"/>
</dbReference>
<dbReference type="GO" id="GO:0000027">
    <property type="term" value="P:ribosomal large subunit assembly"/>
    <property type="evidence" value="ECO:0007669"/>
    <property type="project" value="UniProtKB-UniRule"/>
</dbReference>
<dbReference type="GO" id="GO:0006412">
    <property type="term" value="P:translation"/>
    <property type="evidence" value="ECO:0007669"/>
    <property type="project" value="InterPro"/>
</dbReference>
<dbReference type="CDD" id="cd07026">
    <property type="entry name" value="Ribosomal_L20"/>
    <property type="match status" value="1"/>
</dbReference>
<dbReference type="FunFam" id="1.10.1900.20:FF:000001">
    <property type="entry name" value="50S ribosomal protein L20"/>
    <property type="match status" value="1"/>
</dbReference>
<dbReference type="Gene3D" id="6.10.160.10">
    <property type="match status" value="1"/>
</dbReference>
<dbReference type="Gene3D" id="1.10.1900.20">
    <property type="entry name" value="Ribosomal protein L20"/>
    <property type="match status" value="1"/>
</dbReference>
<dbReference type="HAMAP" id="MF_00382">
    <property type="entry name" value="Ribosomal_bL20"/>
    <property type="match status" value="1"/>
</dbReference>
<dbReference type="InterPro" id="IPR005813">
    <property type="entry name" value="Ribosomal_bL20"/>
</dbReference>
<dbReference type="InterPro" id="IPR049946">
    <property type="entry name" value="RIBOSOMAL_L20_CS"/>
</dbReference>
<dbReference type="InterPro" id="IPR035566">
    <property type="entry name" value="Ribosomal_protein_bL20_C"/>
</dbReference>
<dbReference type="NCBIfam" id="TIGR01032">
    <property type="entry name" value="rplT_bact"/>
    <property type="match status" value="1"/>
</dbReference>
<dbReference type="PANTHER" id="PTHR10986">
    <property type="entry name" value="39S RIBOSOMAL PROTEIN L20"/>
    <property type="match status" value="1"/>
</dbReference>
<dbReference type="Pfam" id="PF00453">
    <property type="entry name" value="Ribosomal_L20"/>
    <property type="match status" value="1"/>
</dbReference>
<dbReference type="PRINTS" id="PR00062">
    <property type="entry name" value="RIBOSOMALL20"/>
</dbReference>
<dbReference type="SUPFAM" id="SSF74731">
    <property type="entry name" value="Ribosomal protein L20"/>
    <property type="match status" value="1"/>
</dbReference>
<dbReference type="PROSITE" id="PS00937">
    <property type="entry name" value="RIBOSOMAL_L20"/>
    <property type="match status" value="1"/>
</dbReference>
<organism>
    <name type="scientific">Dechloromonas aromatica (strain RCB)</name>
    <dbReference type="NCBI Taxonomy" id="159087"/>
    <lineage>
        <taxon>Bacteria</taxon>
        <taxon>Pseudomonadati</taxon>
        <taxon>Pseudomonadota</taxon>
        <taxon>Betaproteobacteria</taxon>
        <taxon>Rhodocyclales</taxon>
        <taxon>Azonexaceae</taxon>
        <taxon>Dechloromonas</taxon>
    </lineage>
</organism>
<protein>
    <recommendedName>
        <fullName evidence="1">Large ribosomal subunit protein bL20</fullName>
    </recommendedName>
    <alternativeName>
        <fullName evidence="2">50S ribosomal protein L20</fullName>
    </alternativeName>
</protein>
<feature type="chain" id="PRO_0000243674" description="Large ribosomal subunit protein bL20">
    <location>
        <begin position="1"/>
        <end position="119"/>
    </location>
</feature>
<sequence length="119" mass="13633">MPRVKRGVTARARHKKVLVQAKGYRGRRKNVYRIAKQAVMKAGQYQYRDRRQRKRQFRSLWIARINAAARELGMKYSTFMNGLKKANIEVDRKVLADLAVFDQPAFAALAAQAKAQLGA</sequence>
<keyword id="KW-0687">Ribonucleoprotein</keyword>
<keyword id="KW-0689">Ribosomal protein</keyword>
<keyword id="KW-0694">RNA-binding</keyword>
<keyword id="KW-0699">rRNA-binding</keyword>
<evidence type="ECO:0000255" key="1">
    <source>
        <dbReference type="HAMAP-Rule" id="MF_00382"/>
    </source>
</evidence>
<evidence type="ECO:0000305" key="2"/>
<comment type="function">
    <text evidence="1">Binds directly to 23S ribosomal RNA and is necessary for the in vitro assembly process of the 50S ribosomal subunit. It is not involved in the protein synthesizing functions of that subunit.</text>
</comment>
<comment type="similarity">
    <text evidence="1">Belongs to the bacterial ribosomal protein bL20 family.</text>
</comment>
<reference key="1">
    <citation type="journal article" date="2009" name="BMC Genomics">
        <title>Metabolic analysis of the soil microbe Dechloromonas aromatica str. RCB: indications of a surprisingly complex life-style and cryptic anaerobic pathways for aromatic degradation.</title>
        <authorList>
            <person name="Salinero K.K."/>
            <person name="Keller K."/>
            <person name="Feil W.S."/>
            <person name="Feil H."/>
            <person name="Trong S."/>
            <person name="Di Bartolo G."/>
            <person name="Lapidus A."/>
        </authorList>
    </citation>
    <scope>NUCLEOTIDE SEQUENCE [LARGE SCALE GENOMIC DNA]</scope>
    <source>
        <strain>RCB</strain>
    </source>
</reference>
<proteinExistence type="inferred from homology"/>